<proteinExistence type="evidence at protein level"/>
<dbReference type="EMBL" id="D14483">
    <property type="protein sequence ID" value="BAA03374.1"/>
    <property type="molecule type" value="mRNA"/>
</dbReference>
<dbReference type="PIR" id="A53120">
    <property type="entry name" value="A53120"/>
</dbReference>
<dbReference type="SMR" id="Q27085"/>
<dbReference type="MEROPS" id="I04.062"/>
<dbReference type="GO" id="GO:0005615">
    <property type="term" value="C:extracellular space"/>
    <property type="evidence" value="ECO:0007669"/>
    <property type="project" value="InterPro"/>
</dbReference>
<dbReference type="GO" id="GO:0004867">
    <property type="term" value="F:serine-type endopeptidase inhibitor activity"/>
    <property type="evidence" value="ECO:0000314"/>
    <property type="project" value="UniProtKB"/>
</dbReference>
<dbReference type="GO" id="GO:1900004">
    <property type="term" value="P:negative regulation of serine-type endopeptidase activity"/>
    <property type="evidence" value="ECO:0000314"/>
    <property type="project" value="UniProtKB"/>
</dbReference>
<dbReference type="CDD" id="cd19577">
    <property type="entry name" value="serpinJ_IRS-2-like"/>
    <property type="match status" value="1"/>
</dbReference>
<dbReference type="FunFam" id="3.30.497.10:FF:000031">
    <property type="entry name" value="Putative salivary serpin"/>
    <property type="match status" value="1"/>
</dbReference>
<dbReference type="Gene3D" id="2.30.39.10">
    <property type="entry name" value="Alpha-1-antitrypsin, domain 1"/>
    <property type="match status" value="1"/>
</dbReference>
<dbReference type="Gene3D" id="3.30.497.10">
    <property type="entry name" value="Antithrombin, subunit I, domain 2"/>
    <property type="match status" value="1"/>
</dbReference>
<dbReference type="InterPro" id="IPR023795">
    <property type="entry name" value="Serpin_CS"/>
</dbReference>
<dbReference type="InterPro" id="IPR023796">
    <property type="entry name" value="Serpin_dom"/>
</dbReference>
<dbReference type="InterPro" id="IPR000215">
    <property type="entry name" value="Serpin_fam"/>
</dbReference>
<dbReference type="InterPro" id="IPR036186">
    <property type="entry name" value="Serpin_sf"/>
</dbReference>
<dbReference type="InterPro" id="IPR042178">
    <property type="entry name" value="Serpin_sf_1"/>
</dbReference>
<dbReference type="InterPro" id="IPR042185">
    <property type="entry name" value="Serpin_sf_2"/>
</dbReference>
<dbReference type="PANTHER" id="PTHR11461:SF211">
    <property type="entry name" value="GH10112P-RELATED"/>
    <property type="match status" value="1"/>
</dbReference>
<dbReference type="PANTHER" id="PTHR11461">
    <property type="entry name" value="SERINE PROTEASE INHIBITOR, SERPIN"/>
    <property type="match status" value="1"/>
</dbReference>
<dbReference type="Pfam" id="PF00079">
    <property type="entry name" value="Serpin"/>
    <property type="match status" value="1"/>
</dbReference>
<dbReference type="SMART" id="SM00093">
    <property type="entry name" value="SERPIN"/>
    <property type="match status" value="1"/>
</dbReference>
<dbReference type="SUPFAM" id="SSF56574">
    <property type="entry name" value="Serpins"/>
    <property type="match status" value="1"/>
</dbReference>
<dbReference type="PROSITE" id="PS00284">
    <property type="entry name" value="SERPIN"/>
    <property type="match status" value="1"/>
</dbReference>
<accession>Q27085</accession>
<feature type="signal peptide" evidence="6">
    <location>
        <begin position="1"/>
        <end position="24"/>
    </location>
</feature>
<feature type="chain" id="PRO_5004203906" description="Intracellular coagulation inhibitor 1" evidence="3">
    <location>
        <begin position="25"/>
        <end position="418"/>
    </location>
</feature>
<feature type="site" description="Reactive bond" evidence="1">
    <location>
        <begin position="383"/>
        <end position="384"/>
    </location>
</feature>
<feature type="glycosylation site" description="N-linked (GlcNAc...) asparagine" evidence="4">
    <location>
        <position position="49"/>
    </location>
</feature>
<feature type="glycosylation site" description="N-linked (GlcNAc...) asparagine" evidence="4">
    <location>
        <position position="404"/>
    </location>
</feature>
<name>LICI1_TACTR</name>
<comment type="function">
    <text evidence="6">Serine protease inhibitor that specifically inhibits clotting factor C (PubMed:8276848). Does not inhibit clotting factor B or proclotting enzyme (PubMed:8276848).</text>
</comment>
<comment type="subunit">
    <text evidence="6 7">Monomer (PubMed:8276848). Forms a covalent heterodimer with clotting factor C (PubMed:8276848). Interacts with big defensin (PubMed:8798603).</text>
</comment>
<comment type="subcellular location">
    <subcellularLocation>
        <location evidence="2">Secreted</location>
    </subcellularLocation>
    <text evidence="2">Localizes in the large granules of hemocytes (By similarity). Secreted in hemolymph in response to external stimuli (By similarity).</text>
</comment>
<comment type="tissue specificity">
    <text evidence="6">Expressed in hemocytes (at protein level).</text>
</comment>
<comment type="PTM">
    <text evidence="6">N-glycosylated.</text>
</comment>
<comment type="similarity">
    <text evidence="5">Belongs to the serpin family.</text>
</comment>
<protein>
    <recommendedName>
        <fullName evidence="9">Intracellular coagulation inhibitor 1</fullName>
    </recommendedName>
    <alternativeName>
        <fullName evidence="8">Limulus intracellular coagulation inhibitor 1</fullName>
        <shortName evidence="8">LICI-1</shortName>
    </alternativeName>
</protein>
<evidence type="ECO:0000250" key="1">
    <source>
        <dbReference type="UniProtKB" id="P01008"/>
    </source>
</evidence>
<evidence type="ECO:0000250" key="2">
    <source>
        <dbReference type="UniProtKB" id="Q27086"/>
    </source>
</evidence>
<evidence type="ECO:0000255" key="3"/>
<evidence type="ECO:0000255" key="4">
    <source>
        <dbReference type="PROSITE-ProRule" id="PRU00498"/>
    </source>
</evidence>
<evidence type="ECO:0000255" key="5">
    <source>
        <dbReference type="RuleBase" id="RU000411"/>
    </source>
</evidence>
<evidence type="ECO:0000269" key="6">
    <source>
    </source>
</evidence>
<evidence type="ECO:0000269" key="7">
    <source>
    </source>
</evidence>
<evidence type="ECO:0000303" key="8">
    <source>
    </source>
</evidence>
<evidence type="ECO:0000305" key="9"/>
<evidence type="ECO:0000312" key="10">
    <source>
        <dbReference type="EMBL" id="BAA03374.1"/>
    </source>
</evidence>
<sequence length="418" mass="47523">MKLGDWKFCLLLFQLMFLTNVCLSDLSFNPYKWPVNQLRRVIGAVKVTNTSNYFGFSLYENLNSNGNVFISPYSLASVMAMLYLGARGVTKNEMDLTLGYNSVNLNSEDLVLGFQQSLLLLNAESKEYQLETANSLMIQNTFNILDNYKRMLEDKFGANVQDVDFINKAELVQRYINAWVAFKTKNKIPILLNEPLKPETRLAFFNAVYFKGVWETKFDSALTRRATFYNNGYVPTQVPMMMLRGIFPFAYVSSLRSYVLELPYKGHEVSMLLLLPKDRNGISDLERDLSSSSLDSVTSNLREIGVLVTIPKFKLEETYEDDLKQSLESMGMTSLFSEANANLEGITGHRDLFVTKITHRTLIEVNEEGTEASGISSVVAGVRSGWKRPTFTADHPFVFFIRHNRSGIILFMGRVSQL</sequence>
<organism evidence="10">
    <name type="scientific">Tachypleus tridentatus</name>
    <name type="common">Japanese horseshoe crab</name>
    <dbReference type="NCBI Taxonomy" id="6853"/>
    <lineage>
        <taxon>Eukaryota</taxon>
        <taxon>Metazoa</taxon>
        <taxon>Ecdysozoa</taxon>
        <taxon>Arthropoda</taxon>
        <taxon>Chelicerata</taxon>
        <taxon>Merostomata</taxon>
        <taxon>Xiphosura</taxon>
        <taxon>Limulidae</taxon>
        <taxon>Tachypleus</taxon>
    </lineage>
</organism>
<keyword id="KW-0903">Direct protein sequencing</keyword>
<keyword id="KW-0325">Glycoprotein</keyword>
<keyword id="KW-0646">Protease inhibitor</keyword>
<keyword id="KW-0964">Secreted</keyword>
<keyword id="KW-0722">Serine protease inhibitor</keyword>
<keyword id="KW-0732">Signal</keyword>
<reference evidence="10" key="1">
    <citation type="journal article" date="1994" name="J. Biol. Chem.">
        <title>A Limulus intracellular coagulation inhibitor with characteristics of the serpin superfamily. Purification, characterization, and cDNA cloning.</title>
        <authorList>
            <person name="Miura Y."/>
            <person name="Kawabata S."/>
            <person name="Iwanaga S."/>
        </authorList>
    </citation>
    <scope>NUCLEOTIDE SEQUENCE [MRNA]</scope>
    <scope>PROTEIN SEQUENCE OF 25-56; 92-106; 127-149; 156-183; 188-206; 278-295; 313-382 AND 389-415</scope>
    <scope>FUNCTION</scope>
    <scope>SUBUNIT</scope>
    <scope>TISSUE SPECIFICITY</scope>
    <scope>GLYCOSYLATION</scope>
</reference>
<reference key="2">
    <citation type="journal article" date="1996" name="J. Biol. Chem.">
        <title>Limulus intracellular coagulation inhibitor type 3. Purification, characterization, cDNA cloning, and tissue localization.</title>
        <authorList>
            <person name="Agarwala K.L."/>
            <person name="Kawabata S."/>
            <person name="Miura Y."/>
            <person name="Kuroki Y."/>
            <person name="Iwanaga S."/>
        </authorList>
    </citation>
    <scope>INTERACTION WITH BIG DEFENSIN</scope>
</reference>